<accession>B0KK68</accession>
<keyword id="KW-0687">Ribonucleoprotein</keyword>
<keyword id="KW-0689">Ribosomal protein</keyword>
<keyword id="KW-0694">RNA-binding</keyword>
<keyword id="KW-0699">rRNA-binding</keyword>
<reference key="1">
    <citation type="submission" date="2008-01" db="EMBL/GenBank/DDBJ databases">
        <title>Complete sequence of Pseudomonas putida GB-1.</title>
        <authorList>
            <consortium name="US DOE Joint Genome Institute"/>
            <person name="Copeland A."/>
            <person name="Lucas S."/>
            <person name="Lapidus A."/>
            <person name="Barry K."/>
            <person name="Glavina del Rio T."/>
            <person name="Dalin E."/>
            <person name="Tice H."/>
            <person name="Pitluck S."/>
            <person name="Bruce D."/>
            <person name="Goodwin L."/>
            <person name="Chertkov O."/>
            <person name="Brettin T."/>
            <person name="Detter J.C."/>
            <person name="Han C."/>
            <person name="Kuske C.R."/>
            <person name="Schmutz J."/>
            <person name="Larimer F."/>
            <person name="Land M."/>
            <person name="Hauser L."/>
            <person name="Kyrpides N."/>
            <person name="Kim E."/>
            <person name="McCarthy J.K."/>
            <person name="Richardson P."/>
        </authorList>
    </citation>
    <scope>NUCLEOTIDE SEQUENCE [LARGE SCALE GENOMIC DNA]</scope>
    <source>
        <strain>GB-1</strain>
    </source>
</reference>
<comment type="function">
    <text evidence="1">One of the primary rRNA binding proteins, this protein initially binds near the 5'-end of the 23S rRNA. It is important during the early stages of 50S assembly. It makes multiple contacts with different domains of the 23S rRNA in the assembled 50S subunit and ribosome.</text>
</comment>
<comment type="function">
    <text evidence="1">Forms part of the polypeptide exit tunnel.</text>
</comment>
<comment type="subunit">
    <text evidence="1">Part of the 50S ribosomal subunit.</text>
</comment>
<comment type="similarity">
    <text evidence="1">Belongs to the universal ribosomal protein uL4 family.</text>
</comment>
<proteinExistence type="inferred from homology"/>
<gene>
    <name evidence="1" type="primary">rplD</name>
    <name type="ordered locus">PputGB1_0485</name>
</gene>
<organism>
    <name type="scientific">Pseudomonas putida (strain GB-1)</name>
    <dbReference type="NCBI Taxonomy" id="76869"/>
    <lineage>
        <taxon>Bacteria</taxon>
        <taxon>Pseudomonadati</taxon>
        <taxon>Pseudomonadota</taxon>
        <taxon>Gammaproteobacteria</taxon>
        <taxon>Pseudomonadales</taxon>
        <taxon>Pseudomonadaceae</taxon>
        <taxon>Pseudomonas</taxon>
    </lineage>
</organism>
<name>RL4_PSEPG</name>
<evidence type="ECO:0000255" key="1">
    <source>
        <dbReference type="HAMAP-Rule" id="MF_01328"/>
    </source>
</evidence>
<evidence type="ECO:0000256" key="2">
    <source>
        <dbReference type="SAM" id="MobiDB-lite"/>
    </source>
</evidence>
<evidence type="ECO:0000305" key="3"/>
<protein>
    <recommendedName>
        <fullName evidence="1">Large ribosomal subunit protein uL4</fullName>
    </recommendedName>
    <alternativeName>
        <fullName evidence="3">50S ribosomal protein L4</fullName>
    </alternativeName>
</protein>
<dbReference type="EMBL" id="CP000926">
    <property type="protein sequence ID" value="ABY96396.1"/>
    <property type="molecule type" value="Genomic_DNA"/>
</dbReference>
<dbReference type="RefSeq" id="WP_003255485.1">
    <property type="nucleotide sequence ID" value="NC_010322.1"/>
</dbReference>
<dbReference type="SMR" id="B0KK68"/>
<dbReference type="GeneID" id="93675523"/>
<dbReference type="KEGG" id="ppg:PputGB1_0485"/>
<dbReference type="eggNOG" id="COG0088">
    <property type="taxonomic scope" value="Bacteria"/>
</dbReference>
<dbReference type="HOGENOM" id="CLU_041575_5_2_6"/>
<dbReference type="Proteomes" id="UP000002157">
    <property type="component" value="Chromosome"/>
</dbReference>
<dbReference type="GO" id="GO:1990904">
    <property type="term" value="C:ribonucleoprotein complex"/>
    <property type="evidence" value="ECO:0007669"/>
    <property type="project" value="UniProtKB-KW"/>
</dbReference>
<dbReference type="GO" id="GO:0005840">
    <property type="term" value="C:ribosome"/>
    <property type="evidence" value="ECO:0007669"/>
    <property type="project" value="UniProtKB-KW"/>
</dbReference>
<dbReference type="GO" id="GO:0019843">
    <property type="term" value="F:rRNA binding"/>
    <property type="evidence" value="ECO:0007669"/>
    <property type="project" value="UniProtKB-UniRule"/>
</dbReference>
<dbReference type="GO" id="GO:0003735">
    <property type="term" value="F:structural constituent of ribosome"/>
    <property type="evidence" value="ECO:0007669"/>
    <property type="project" value="InterPro"/>
</dbReference>
<dbReference type="GO" id="GO:0006412">
    <property type="term" value="P:translation"/>
    <property type="evidence" value="ECO:0007669"/>
    <property type="project" value="UniProtKB-UniRule"/>
</dbReference>
<dbReference type="FunFam" id="3.40.1370.10:FF:000001">
    <property type="entry name" value="50S ribosomal protein L4"/>
    <property type="match status" value="1"/>
</dbReference>
<dbReference type="Gene3D" id="3.40.1370.10">
    <property type="match status" value="1"/>
</dbReference>
<dbReference type="HAMAP" id="MF_01328_B">
    <property type="entry name" value="Ribosomal_uL4_B"/>
    <property type="match status" value="1"/>
</dbReference>
<dbReference type="InterPro" id="IPR002136">
    <property type="entry name" value="Ribosomal_uL4"/>
</dbReference>
<dbReference type="InterPro" id="IPR013005">
    <property type="entry name" value="Ribosomal_uL4-like"/>
</dbReference>
<dbReference type="InterPro" id="IPR023574">
    <property type="entry name" value="Ribosomal_uL4_dom_sf"/>
</dbReference>
<dbReference type="NCBIfam" id="TIGR03953">
    <property type="entry name" value="rplD_bact"/>
    <property type="match status" value="1"/>
</dbReference>
<dbReference type="PANTHER" id="PTHR10746">
    <property type="entry name" value="50S RIBOSOMAL PROTEIN L4"/>
    <property type="match status" value="1"/>
</dbReference>
<dbReference type="PANTHER" id="PTHR10746:SF6">
    <property type="entry name" value="LARGE RIBOSOMAL SUBUNIT PROTEIN UL4M"/>
    <property type="match status" value="1"/>
</dbReference>
<dbReference type="Pfam" id="PF00573">
    <property type="entry name" value="Ribosomal_L4"/>
    <property type="match status" value="1"/>
</dbReference>
<dbReference type="SUPFAM" id="SSF52166">
    <property type="entry name" value="Ribosomal protein L4"/>
    <property type="match status" value="1"/>
</dbReference>
<feature type="chain" id="PRO_1000086532" description="Large ribosomal subunit protein uL4">
    <location>
        <begin position="1"/>
        <end position="200"/>
    </location>
</feature>
<feature type="region of interest" description="Disordered" evidence="2">
    <location>
        <begin position="38"/>
        <end position="72"/>
    </location>
</feature>
<sequence length="200" mass="21811">MQLNVNDAQAIEVSELTFGGEFNETLVHQAVVAYMAGGRQGTKQQKTRSDVAGGGKRPWRQKGTGRARAGTTRGPIWRGGGVTFAARPQDHSQKLNKKMYRAALRSILAELVRSDRLVVVQDFAVEAPKTKDLLNKLNGMGLSDVLIVSDAVDQNLYLAARNLPHVDVRDVQGSDPVSLIAYEKVLITVSAVKKFEELLG</sequence>